<proteinExistence type="inferred from homology"/>
<dbReference type="EMBL" id="CP000930">
    <property type="protein sequence ID" value="ABZ84543.1"/>
    <property type="molecule type" value="Genomic_DNA"/>
</dbReference>
<dbReference type="RefSeq" id="WP_012283044.1">
    <property type="nucleotide sequence ID" value="NC_010337.2"/>
</dbReference>
<dbReference type="SMR" id="B0TFW3"/>
<dbReference type="STRING" id="498761.HM1_1985"/>
<dbReference type="KEGG" id="hmo:HM1_1985"/>
<dbReference type="eggNOG" id="COG1160">
    <property type="taxonomic scope" value="Bacteria"/>
</dbReference>
<dbReference type="HOGENOM" id="CLU_016077_6_2_9"/>
<dbReference type="OrthoDB" id="9805918at2"/>
<dbReference type="Proteomes" id="UP000008550">
    <property type="component" value="Chromosome"/>
</dbReference>
<dbReference type="GO" id="GO:0005525">
    <property type="term" value="F:GTP binding"/>
    <property type="evidence" value="ECO:0007669"/>
    <property type="project" value="UniProtKB-UniRule"/>
</dbReference>
<dbReference type="GO" id="GO:0043022">
    <property type="term" value="F:ribosome binding"/>
    <property type="evidence" value="ECO:0007669"/>
    <property type="project" value="TreeGrafter"/>
</dbReference>
<dbReference type="GO" id="GO:0042254">
    <property type="term" value="P:ribosome biogenesis"/>
    <property type="evidence" value="ECO:0007669"/>
    <property type="project" value="UniProtKB-KW"/>
</dbReference>
<dbReference type="CDD" id="cd01894">
    <property type="entry name" value="EngA1"/>
    <property type="match status" value="1"/>
</dbReference>
<dbReference type="CDD" id="cd01895">
    <property type="entry name" value="EngA2"/>
    <property type="match status" value="1"/>
</dbReference>
<dbReference type="FunFam" id="3.30.300.20:FF:000004">
    <property type="entry name" value="GTPase Der"/>
    <property type="match status" value="1"/>
</dbReference>
<dbReference type="FunFam" id="3.40.50.300:FF:000040">
    <property type="entry name" value="GTPase Der"/>
    <property type="match status" value="1"/>
</dbReference>
<dbReference type="FunFam" id="3.40.50.300:FF:000057">
    <property type="entry name" value="GTPase Der"/>
    <property type="match status" value="1"/>
</dbReference>
<dbReference type="Gene3D" id="3.30.300.20">
    <property type="match status" value="1"/>
</dbReference>
<dbReference type="Gene3D" id="3.40.50.300">
    <property type="entry name" value="P-loop containing nucleotide triphosphate hydrolases"/>
    <property type="match status" value="2"/>
</dbReference>
<dbReference type="HAMAP" id="MF_00195">
    <property type="entry name" value="GTPase_Der"/>
    <property type="match status" value="1"/>
</dbReference>
<dbReference type="InterPro" id="IPR031166">
    <property type="entry name" value="G_ENGA"/>
</dbReference>
<dbReference type="InterPro" id="IPR006073">
    <property type="entry name" value="GTP-bd"/>
</dbReference>
<dbReference type="InterPro" id="IPR016484">
    <property type="entry name" value="GTPase_Der"/>
</dbReference>
<dbReference type="InterPro" id="IPR032859">
    <property type="entry name" value="KH_dom-like"/>
</dbReference>
<dbReference type="InterPro" id="IPR015946">
    <property type="entry name" value="KH_dom-like_a/b"/>
</dbReference>
<dbReference type="InterPro" id="IPR027417">
    <property type="entry name" value="P-loop_NTPase"/>
</dbReference>
<dbReference type="InterPro" id="IPR005225">
    <property type="entry name" value="Small_GTP-bd"/>
</dbReference>
<dbReference type="NCBIfam" id="TIGR03594">
    <property type="entry name" value="GTPase_EngA"/>
    <property type="match status" value="1"/>
</dbReference>
<dbReference type="NCBIfam" id="TIGR00231">
    <property type="entry name" value="small_GTP"/>
    <property type="match status" value="2"/>
</dbReference>
<dbReference type="PANTHER" id="PTHR43834">
    <property type="entry name" value="GTPASE DER"/>
    <property type="match status" value="1"/>
</dbReference>
<dbReference type="PANTHER" id="PTHR43834:SF6">
    <property type="entry name" value="GTPASE DER"/>
    <property type="match status" value="1"/>
</dbReference>
<dbReference type="Pfam" id="PF14714">
    <property type="entry name" value="KH_dom-like"/>
    <property type="match status" value="1"/>
</dbReference>
<dbReference type="Pfam" id="PF01926">
    <property type="entry name" value="MMR_HSR1"/>
    <property type="match status" value="2"/>
</dbReference>
<dbReference type="PIRSF" id="PIRSF006485">
    <property type="entry name" value="GTP-binding_EngA"/>
    <property type="match status" value="1"/>
</dbReference>
<dbReference type="PRINTS" id="PR00326">
    <property type="entry name" value="GTP1OBG"/>
</dbReference>
<dbReference type="SUPFAM" id="SSF52540">
    <property type="entry name" value="P-loop containing nucleoside triphosphate hydrolases"/>
    <property type="match status" value="2"/>
</dbReference>
<dbReference type="PROSITE" id="PS51712">
    <property type="entry name" value="G_ENGA"/>
    <property type="match status" value="2"/>
</dbReference>
<reference key="1">
    <citation type="journal article" date="2008" name="J. Bacteriol.">
        <title>The genome of Heliobacterium modesticaldum, a phototrophic representative of the Firmicutes containing the simplest photosynthetic apparatus.</title>
        <authorList>
            <person name="Sattley W.M."/>
            <person name="Madigan M.T."/>
            <person name="Swingley W.D."/>
            <person name="Cheung P.C."/>
            <person name="Clocksin K.M."/>
            <person name="Conrad A.L."/>
            <person name="Dejesa L.C."/>
            <person name="Honchak B.M."/>
            <person name="Jung D.O."/>
            <person name="Karbach L.E."/>
            <person name="Kurdoglu A."/>
            <person name="Lahiri S."/>
            <person name="Mastrian S.D."/>
            <person name="Page L.E."/>
            <person name="Taylor H.L."/>
            <person name="Wang Z.T."/>
            <person name="Raymond J."/>
            <person name="Chen M."/>
            <person name="Blankenship R.E."/>
            <person name="Touchman J.W."/>
        </authorList>
    </citation>
    <scope>NUCLEOTIDE SEQUENCE [LARGE SCALE GENOMIC DNA]</scope>
    <source>
        <strain>ATCC 51547 / Ice1</strain>
    </source>
</reference>
<accession>B0TFW3</accession>
<name>DER_HELMI</name>
<sequence length="442" mass="49615">MAKPIVAIVGRPNVGKSTLFNRLTGGRVAIVEDQPGVTRDRLYRDANWLDREFTVVDTGGLDFGDRENPFSAIIHKQAEAAMEEADVILFLVDGRSGITADDEAVAAILRKAKKPVFLVVNKIEDFSQRERYFDFYSLGLGEPIPISASHGMNTGDLLDAVVAVLPENNGEDDDPDTIKIAVIGRPNVGKSSLVNAILGQERVIVSDIPGTTRDAIDTAFDRDGKRYILIDTAGMRRKGRIEEAVERYSVMRSLRAIDRSDVVLMVIDASQGVTEQDKKIAGYAHEAGKACVLVLNKWDLVPKDDKTMSRFDKVVRSEMSFLAYAPTIYVSALTKQRLPKILELVDFVAEQATRRISTSVLNELLADIQRVTPAPTDRGRRLKILFVTQTAVKPPTFVFFVNDEDLFHFSYRRHVENRFRETFGFEGVPMRFFIREREKEKD</sequence>
<gene>
    <name evidence="1" type="primary">der</name>
    <name type="synonym">engA</name>
    <name type="ordered locus">Helmi_19180</name>
    <name type="ORF">HM1_1985</name>
</gene>
<organism>
    <name type="scientific">Heliobacterium modesticaldum (strain ATCC 51547 / Ice1)</name>
    <dbReference type="NCBI Taxonomy" id="498761"/>
    <lineage>
        <taxon>Bacteria</taxon>
        <taxon>Bacillati</taxon>
        <taxon>Bacillota</taxon>
        <taxon>Clostridia</taxon>
        <taxon>Eubacteriales</taxon>
        <taxon>Heliobacteriaceae</taxon>
        <taxon>Heliomicrobium</taxon>
    </lineage>
</organism>
<comment type="function">
    <text evidence="1">GTPase that plays an essential role in the late steps of ribosome biogenesis.</text>
</comment>
<comment type="subunit">
    <text evidence="1">Associates with the 50S ribosomal subunit.</text>
</comment>
<comment type="similarity">
    <text evidence="1">Belongs to the TRAFAC class TrmE-Era-EngA-EngB-Septin-like GTPase superfamily. EngA (Der) GTPase family.</text>
</comment>
<keyword id="KW-0342">GTP-binding</keyword>
<keyword id="KW-0547">Nucleotide-binding</keyword>
<keyword id="KW-1185">Reference proteome</keyword>
<keyword id="KW-0677">Repeat</keyword>
<keyword id="KW-0690">Ribosome biogenesis</keyword>
<protein>
    <recommendedName>
        <fullName evidence="1">GTPase Der</fullName>
    </recommendedName>
    <alternativeName>
        <fullName evidence="1">GTP-binding protein EngA</fullName>
    </alternativeName>
</protein>
<evidence type="ECO:0000255" key="1">
    <source>
        <dbReference type="HAMAP-Rule" id="MF_00195"/>
    </source>
</evidence>
<feature type="chain" id="PRO_1000099127" description="GTPase Der">
    <location>
        <begin position="1"/>
        <end position="442"/>
    </location>
</feature>
<feature type="domain" description="EngA-type G 1">
    <location>
        <begin position="4"/>
        <end position="169"/>
    </location>
</feature>
<feature type="domain" description="EngA-type G 2">
    <location>
        <begin position="178"/>
        <end position="353"/>
    </location>
</feature>
<feature type="domain" description="KH-like" evidence="1">
    <location>
        <begin position="354"/>
        <end position="438"/>
    </location>
</feature>
<feature type="binding site" evidence="1">
    <location>
        <begin position="10"/>
        <end position="17"/>
    </location>
    <ligand>
        <name>GTP</name>
        <dbReference type="ChEBI" id="CHEBI:37565"/>
        <label>1</label>
    </ligand>
</feature>
<feature type="binding site" evidence="1">
    <location>
        <begin position="57"/>
        <end position="61"/>
    </location>
    <ligand>
        <name>GTP</name>
        <dbReference type="ChEBI" id="CHEBI:37565"/>
        <label>1</label>
    </ligand>
</feature>
<feature type="binding site" evidence="1">
    <location>
        <begin position="121"/>
        <end position="124"/>
    </location>
    <ligand>
        <name>GTP</name>
        <dbReference type="ChEBI" id="CHEBI:37565"/>
        <label>1</label>
    </ligand>
</feature>
<feature type="binding site" evidence="1">
    <location>
        <begin position="184"/>
        <end position="191"/>
    </location>
    <ligand>
        <name>GTP</name>
        <dbReference type="ChEBI" id="CHEBI:37565"/>
        <label>2</label>
    </ligand>
</feature>
<feature type="binding site" evidence="1">
    <location>
        <begin position="231"/>
        <end position="235"/>
    </location>
    <ligand>
        <name>GTP</name>
        <dbReference type="ChEBI" id="CHEBI:37565"/>
        <label>2</label>
    </ligand>
</feature>
<feature type="binding site" evidence="1">
    <location>
        <begin position="296"/>
        <end position="299"/>
    </location>
    <ligand>
        <name>GTP</name>
        <dbReference type="ChEBI" id="CHEBI:37565"/>
        <label>2</label>
    </ligand>
</feature>